<reference key="1">
    <citation type="submission" date="2005-09" db="EMBL/GenBank/DDBJ databases">
        <title>Complete sequence of chromosome 1 of Rhodobacter sphaeroides 2.4.1.</title>
        <authorList>
            <person name="Copeland A."/>
            <person name="Lucas S."/>
            <person name="Lapidus A."/>
            <person name="Barry K."/>
            <person name="Detter J.C."/>
            <person name="Glavina T."/>
            <person name="Hammon N."/>
            <person name="Israni S."/>
            <person name="Pitluck S."/>
            <person name="Richardson P."/>
            <person name="Mackenzie C."/>
            <person name="Choudhary M."/>
            <person name="Larimer F."/>
            <person name="Hauser L.J."/>
            <person name="Land M."/>
            <person name="Donohue T.J."/>
            <person name="Kaplan S."/>
        </authorList>
    </citation>
    <scope>NUCLEOTIDE SEQUENCE [LARGE SCALE GENOMIC DNA]</scope>
    <source>
        <strain>ATCC 17023 / DSM 158 / JCM 6121 / CCUG 31486 / LMG 2827 / NBRC 12203 / NCIMB 8253 / ATH 2.4.1.</strain>
    </source>
</reference>
<sequence>MKLSADLKAFEGRIGHQFREPERLLRAVTHSSLSSVTRSDNQRLEFLGDRVLGLVMAEALLAADRAASEGQLAPRFNALVRKETCAAVAREVALGDVLKLGRSEMMSGGRRKEALLGDALEAVIAAVYLDAGFEAARQLVLRLWGARIAQVERDARDAKTALQEWAQARGLPPPTYEAVDRSGPDHAPIFTVEVRLGNGETDRAAAGTKRVAEQAAARALLARMEARHD</sequence>
<accession>Q3J5W1</accession>
<feature type="chain" id="PRO_0000228573" description="Ribonuclease 3">
    <location>
        <begin position="1"/>
        <end position="229"/>
    </location>
</feature>
<feature type="domain" description="RNase III" evidence="1">
    <location>
        <begin position="7"/>
        <end position="132"/>
    </location>
</feature>
<feature type="domain" description="DRBM" evidence="1">
    <location>
        <begin position="157"/>
        <end position="226"/>
    </location>
</feature>
<feature type="active site" evidence="1">
    <location>
        <position position="49"/>
    </location>
</feature>
<feature type="active site" evidence="1">
    <location>
        <position position="121"/>
    </location>
</feature>
<feature type="binding site" evidence="1">
    <location>
        <position position="45"/>
    </location>
    <ligand>
        <name>Mg(2+)</name>
        <dbReference type="ChEBI" id="CHEBI:18420"/>
    </ligand>
</feature>
<feature type="binding site" evidence="1">
    <location>
        <position position="118"/>
    </location>
    <ligand>
        <name>Mg(2+)</name>
        <dbReference type="ChEBI" id="CHEBI:18420"/>
    </ligand>
</feature>
<feature type="binding site" evidence="1">
    <location>
        <position position="121"/>
    </location>
    <ligand>
        <name>Mg(2+)</name>
        <dbReference type="ChEBI" id="CHEBI:18420"/>
    </ligand>
</feature>
<name>RNC_CERS4</name>
<comment type="function">
    <text evidence="1">Digests double-stranded RNA. Involved in the processing of primary rRNA transcript to yield the immediate precursors to the large and small rRNAs (23S and 16S). Processes some mRNAs, and tRNAs when they are encoded in the rRNA operon. Processes pre-crRNA and tracrRNA of type II CRISPR loci if present in the organism.</text>
</comment>
<comment type="catalytic activity">
    <reaction evidence="1">
        <text>Endonucleolytic cleavage to 5'-phosphomonoester.</text>
        <dbReference type="EC" id="3.1.26.3"/>
    </reaction>
</comment>
<comment type="cofactor">
    <cofactor evidence="1">
        <name>Mg(2+)</name>
        <dbReference type="ChEBI" id="CHEBI:18420"/>
    </cofactor>
</comment>
<comment type="subunit">
    <text evidence="1">Homodimer.</text>
</comment>
<comment type="subcellular location">
    <subcellularLocation>
        <location evidence="1">Cytoplasm</location>
    </subcellularLocation>
</comment>
<comment type="similarity">
    <text evidence="1">Belongs to the ribonuclease III family.</text>
</comment>
<organism>
    <name type="scientific">Cereibacter sphaeroides (strain ATCC 17023 / DSM 158 / JCM 6121 / CCUG 31486 / LMG 2827 / NBRC 12203 / NCIMB 8253 / ATH 2.4.1.)</name>
    <name type="common">Rhodobacter sphaeroides</name>
    <dbReference type="NCBI Taxonomy" id="272943"/>
    <lineage>
        <taxon>Bacteria</taxon>
        <taxon>Pseudomonadati</taxon>
        <taxon>Pseudomonadota</taxon>
        <taxon>Alphaproteobacteria</taxon>
        <taxon>Rhodobacterales</taxon>
        <taxon>Paracoccaceae</taxon>
        <taxon>Cereibacter</taxon>
    </lineage>
</organism>
<evidence type="ECO:0000255" key="1">
    <source>
        <dbReference type="HAMAP-Rule" id="MF_00104"/>
    </source>
</evidence>
<gene>
    <name evidence="1" type="primary">rnc</name>
    <name type="ordered locus">RHOS4_02550</name>
    <name type="ORF">RSP_1675</name>
</gene>
<keyword id="KW-0963">Cytoplasm</keyword>
<keyword id="KW-0255">Endonuclease</keyword>
<keyword id="KW-0378">Hydrolase</keyword>
<keyword id="KW-0460">Magnesium</keyword>
<keyword id="KW-0479">Metal-binding</keyword>
<keyword id="KW-0507">mRNA processing</keyword>
<keyword id="KW-0540">Nuclease</keyword>
<keyword id="KW-1185">Reference proteome</keyword>
<keyword id="KW-0694">RNA-binding</keyword>
<keyword id="KW-0698">rRNA processing</keyword>
<keyword id="KW-0699">rRNA-binding</keyword>
<keyword id="KW-0819">tRNA processing</keyword>
<proteinExistence type="inferred from homology"/>
<protein>
    <recommendedName>
        <fullName evidence="1">Ribonuclease 3</fullName>
        <ecNumber evidence="1">3.1.26.3</ecNumber>
    </recommendedName>
    <alternativeName>
        <fullName evidence="1">Ribonuclease III</fullName>
        <shortName evidence="1">RNase III</shortName>
    </alternativeName>
</protein>
<dbReference type="EC" id="3.1.26.3" evidence="1"/>
<dbReference type="EMBL" id="CP000143">
    <property type="protein sequence ID" value="ABA77823.1"/>
    <property type="molecule type" value="Genomic_DNA"/>
</dbReference>
<dbReference type="RefSeq" id="WP_002722419.1">
    <property type="nucleotide sequence ID" value="NZ_CP030271.1"/>
</dbReference>
<dbReference type="RefSeq" id="YP_351724.1">
    <property type="nucleotide sequence ID" value="NC_007493.2"/>
</dbReference>
<dbReference type="SMR" id="Q3J5W1"/>
<dbReference type="STRING" id="272943.RSP_1675"/>
<dbReference type="EnsemblBacteria" id="ABA77823">
    <property type="protein sequence ID" value="ABA77823"/>
    <property type="gene ID" value="RSP_1675"/>
</dbReference>
<dbReference type="GeneID" id="67448435"/>
<dbReference type="KEGG" id="rsp:RSP_1675"/>
<dbReference type="PATRIC" id="fig|272943.9.peg.552"/>
<dbReference type="eggNOG" id="COG0571">
    <property type="taxonomic scope" value="Bacteria"/>
</dbReference>
<dbReference type="OrthoDB" id="9805026at2"/>
<dbReference type="PhylomeDB" id="Q3J5W1"/>
<dbReference type="Proteomes" id="UP000002703">
    <property type="component" value="Chromosome 1"/>
</dbReference>
<dbReference type="GO" id="GO:0005737">
    <property type="term" value="C:cytoplasm"/>
    <property type="evidence" value="ECO:0007669"/>
    <property type="project" value="UniProtKB-SubCell"/>
</dbReference>
<dbReference type="GO" id="GO:0003725">
    <property type="term" value="F:double-stranded RNA binding"/>
    <property type="evidence" value="ECO:0007669"/>
    <property type="project" value="TreeGrafter"/>
</dbReference>
<dbReference type="GO" id="GO:0046872">
    <property type="term" value="F:metal ion binding"/>
    <property type="evidence" value="ECO:0007669"/>
    <property type="project" value="UniProtKB-KW"/>
</dbReference>
<dbReference type="GO" id="GO:0004525">
    <property type="term" value="F:ribonuclease III activity"/>
    <property type="evidence" value="ECO:0007669"/>
    <property type="project" value="UniProtKB-UniRule"/>
</dbReference>
<dbReference type="GO" id="GO:0019843">
    <property type="term" value="F:rRNA binding"/>
    <property type="evidence" value="ECO:0007669"/>
    <property type="project" value="UniProtKB-KW"/>
</dbReference>
<dbReference type="GO" id="GO:0006397">
    <property type="term" value="P:mRNA processing"/>
    <property type="evidence" value="ECO:0007669"/>
    <property type="project" value="UniProtKB-UniRule"/>
</dbReference>
<dbReference type="GO" id="GO:0010468">
    <property type="term" value="P:regulation of gene expression"/>
    <property type="evidence" value="ECO:0007669"/>
    <property type="project" value="TreeGrafter"/>
</dbReference>
<dbReference type="GO" id="GO:0006364">
    <property type="term" value="P:rRNA processing"/>
    <property type="evidence" value="ECO:0007669"/>
    <property type="project" value="UniProtKB-UniRule"/>
</dbReference>
<dbReference type="GO" id="GO:0008033">
    <property type="term" value="P:tRNA processing"/>
    <property type="evidence" value="ECO:0007669"/>
    <property type="project" value="UniProtKB-KW"/>
</dbReference>
<dbReference type="CDD" id="cd10845">
    <property type="entry name" value="DSRM_RNAse_III_family"/>
    <property type="match status" value="1"/>
</dbReference>
<dbReference type="CDD" id="cd00593">
    <property type="entry name" value="RIBOc"/>
    <property type="match status" value="1"/>
</dbReference>
<dbReference type="FunFam" id="1.10.1520.10:FF:000001">
    <property type="entry name" value="Ribonuclease 3"/>
    <property type="match status" value="1"/>
</dbReference>
<dbReference type="Gene3D" id="3.30.160.20">
    <property type="match status" value="1"/>
</dbReference>
<dbReference type="Gene3D" id="1.10.1520.10">
    <property type="entry name" value="Ribonuclease III domain"/>
    <property type="match status" value="1"/>
</dbReference>
<dbReference type="HAMAP" id="MF_00104">
    <property type="entry name" value="RNase_III"/>
    <property type="match status" value="1"/>
</dbReference>
<dbReference type="InterPro" id="IPR014720">
    <property type="entry name" value="dsRBD_dom"/>
</dbReference>
<dbReference type="InterPro" id="IPR011907">
    <property type="entry name" value="RNase_III"/>
</dbReference>
<dbReference type="InterPro" id="IPR000999">
    <property type="entry name" value="RNase_III_dom"/>
</dbReference>
<dbReference type="InterPro" id="IPR036389">
    <property type="entry name" value="RNase_III_sf"/>
</dbReference>
<dbReference type="NCBIfam" id="TIGR02191">
    <property type="entry name" value="RNaseIII"/>
    <property type="match status" value="1"/>
</dbReference>
<dbReference type="PANTHER" id="PTHR11207:SF0">
    <property type="entry name" value="RIBONUCLEASE 3"/>
    <property type="match status" value="1"/>
</dbReference>
<dbReference type="PANTHER" id="PTHR11207">
    <property type="entry name" value="RIBONUCLEASE III"/>
    <property type="match status" value="1"/>
</dbReference>
<dbReference type="Pfam" id="PF00035">
    <property type="entry name" value="dsrm"/>
    <property type="match status" value="1"/>
</dbReference>
<dbReference type="Pfam" id="PF14622">
    <property type="entry name" value="Ribonucleas_3_3"/>
    <property type="match status" value="1"/>
</dbReference>
<dbReference type="SMART" id="SM00358">
    <property type="entry name" value="DSRM"/>
    <property type="match status" value="1"/>
</dbReference>
<dbReference type="SMART" id="SM00535">
    <property type="entry name" value="RIBOc"/>
    <property type="match status" value="1"/>
</dbReference>
<dbReference type="SUPFAM" id="SSF54768">
    <property type="entry name" value="dsRNA-binding domain-like"/>
    <property type="match status" value="1"/>
</dbReference>
<dbReference type="SUPFAM" id="SSF69065">
    <property type="entry name" value="RNase III domain-like"/>
    <property type="match status" value="1"/>
</dbReference>
<dbReference type="PROSITE" id="PS50137">
    <property type="entry name" value="DS_RBD"/>
    <property type="match status" value="1"/>
</dbReference>
<dbReference type="PROSITE" id="PS00517">
    <property type="entry name" value="RNASE_3_1"/>
    <property type="match status" value="1"/>
</dbReference>
<dbReference type="PROSITE" id="PS50142">
    <property type="entry name" value="RNASE_3_2"/>
    <property type="match status" value="1"/>
</dbReference>